<protein>
    <recommendedName>
        <fullName>Potassium channel toxin alpha-KTx 12.5</fullName>
    </recommendedName>
    <alternativeName>
        <fullName>Toxin alpha-KTx10</fullName>
        <shortName>LmKTx10</shortName>
    </alternativeName>
</protein>
<reference key="1">
    <citation type="journal article" date="2009" name="Peptides">
        <title>Molecular cloning and functional identification of a new K(+) channel blocker, LmKTx10, from the scorpion Lychas mucronatus.</title>
        <authorList>
            <person name="Liu J."/>
            <person name="Ma Y."/>
            <person name="Yin S."/>
            <person name="Zhao R."/>
            <person name="Fan S."/>
            <person name="Hu Y."/>
            <person name="Wu Y."/>
            <person name="Cao Z."/>
            <person name="Li W."/>
        </authorList>
    </citation>
    <scope>NUCLEOTIDE SEQUENCE [MRNA]</scope>
    <scope>FUNCTION</scope>
    <scope>RECOMBINANT EXPRESSION</scope>
    <source>
        <tissue>Venom gland</tissue>
    </source>
</reference>
<reference key="2">
    <citation type="journal article" date="2010" name="BMC Genomics">
        <title>Comparative venom gland transcriptome analysis of the scorpion Lychas mucronatus reveals intraspecific toxic gene diversity and new venomous components.</title>
        <authorList>
            <person name="Zhao R."/>
            <person name="Ma Y."/>
            <person name="He Y."/>
            <person name="Di Z."/>
            <person name="Wu Y.-L."/>
            <person name="Cao Z.-J."/>
            <person name="Li W.-X."/>
        </authorList>
    </citation>
    <scope>NUCLEOTIDE SEQUENCE [MRNA]</scope>
    <source>
        <strain>Hainan</strain>
        <tissue>Venom gland</tissue>
    </source>
</reference>
<feature type="signal peptide" evidence="2">
    <location>
        <begin position="1"/>
        <end position="22"/>
    </location>
</feature>
<feature type="chain" id="PRO_0000396529" description="Potassium channel toxin alpha-KTx 12.5" evidence="5">
    <location>
        <begin position="23"/>
        <end position="60"/>
    </location>
</feature>
<feature type="site" description="Basic residue of the functional dyad" evidence="1">
    <location>
        <position position="50"/>
    </location>
</feature>
<feature type="site" description="Aromatic residue of the functional dyad" evidence="1">
    <location>
        <position position="59"/>
    </location>
</feature>
<feature type="disulfide bond" evidence="1">
    <location>
        <begin position="30"/>
        <end position="51"/>
    </location>
</feature>
<feature type="disulfide bond" evidence="1">
    <location>
        <begin position="36"/>
        <end position="56"/>
    </location>
</feature>
<feature type="disulfide bond" evidence="1">
    <location>
        <begin position="40"/>
        <end position="58"/>
    </location>
</feature>
<organism>
    <name type="scientific">Lychas mucronatus</name>
    <name type="common">Chinese swimming scorpion</name>
    <dbReference type="NCBI Taxonomy" id="172552"/>
    <lineage>
        <taxon>Eukaryota</taxon>
        <taxon>Metazoa</taxon>
        <taxon>Ecdysozoa</taxon>
        <taxon>Arthropoda</taxon>
        <taxon>Chelicerata</taxon>
        <taxon>Arachnida</taxon>
        <taxon>Scorpiones</taxon>
        <taxon>Buthida</taxon>
        <taxon>Buthoidea</taxon>
        <taxon>Buthidae</taxon>
        <taxon>Lychas</taxon>
    </lineage>
</organism>
<comment type="function">
    <text evidence="3">This recombinant toxin inhibits the mammalian voltage-gated potassium channels Kv1.3/KCNA3 (IC(50)=28 nM). Kv1.1/KCNA1 and Kv1.2/KCNA2 potassium channels are also weakly inhibited (IC(50)=1.73 uM and IC(50)=12.63 uM, respectively).</text>
</comment>
<comment type="subcellular location">
    <subcellularLocation>
        <location evidence="5 6">Secreted</location>
    </subcellularLocation>
</comment>
<comment type="tissue specificity">
    <text evidence="5 6">Expressed by the venom gland.</text>
</comment>
<comment type="domain">
    <text evidence="4">Has the structural arrangement of an alpha-helix connected to antiparallel beta-sheets by disulfide bonds (CS-alpha/beta).</text>
</comment>
<comment type="similarity">
    <text evidence="4">Belongs to the short scorpion toxin superfamily. Potassium channel inhibitor family. Alpha-KTx 12 subfamily.</text>
</comment>
<name>KA125_LYCMC</name>
<proteinExistence type="inferred from homology"/>
<accession>P0CH12</accession>
<accession>D9U2A9</accession>
<sequence>MNKLPILIFMLLVCSMFISSDCQKHTDIKCSSSSSCYEPCRGVTGRAHGKCMNGRCTCYY</sequence>
<keyword id="KW-1015">Disulfide bond</keyword>
<keyword id="KW-0872">Ion channel impairing toxin</keyword>
<keyword id="KW-0528">Neurotoxin</keyword>
<keyword id="KW-0632">Potassium channel impairing toxin</keyword>
<keyword id="KW-0964">Secreted</keyword>
<keyword id="KW-0732">Signal</keyword>
<keyword id="KW-0800">Toxin</keyword>
<keyword id="KW-1220">Voltage-gated potassium channel impairing toxin</keyword>
<evidence type="ECO:0000250" key="1"/>
<evidence type="ECO:0000255" key="2"/>
<evidence type="ECO:0000269" key="3">
    <source>
    </source>
</evidence>
<evidence type="ECO:0000305" key="4"/>
<evidence type="ECO:0000305" key="5">
    <source>
    </source>
</evidence>
<evidence type="ECO:0000305" key="6">
    <source>
    </source>
</evidence>
<dbReference type="EMBL" id="EU163856">
    <property type="protein sequence ID" value="ABY26665.1"/>
    <property type="molecule type" value="mRNA"/>
</dbReference>
<dbReference type="SMR" id="P0CH12"/>
<dbReference type="GO" id="GO:0005576">
    <property type="term" value="C:extracellular region"/>
    <property type="evidence" value="ECO:0007669"/>
    <property type="project" value="UniProtKB-SubCell"/>
</dbReference>
<dbReference type="GO" id="GO:0008200">
    <property type="term" value="F:ion channel inhibitor activity"/>
    <property type="evidence" value="ECO:0007669"/>
    <property type="project" value="InterPro"/>
</dbReference>
<dbReference type="GO" id="GO:0015459">
    <property type="term" value="F:potassium channel regulator activity"/>
    <property type="evidence" value="ECO:0007669"/>
    <property type="project" value="UniProtKB-KW"/>
</dbReference>
<dbReference type="GO" id="GO:0090729">
    <property type="term" value="F:toxin activity"/>
    <property type="evidence" value="ECO:0007669"/>
    <property type="project" value="UniProtKB-KW"/>
</dbReference>
<dbReference type="Gene3D" id="3.30.30.10">
    <property type="entry name" value="Knottin, scorpion toxin-like"/>
    <property type="match status" value="1"/>
</dbReference>
<dbReference type="InterPro" id="IPR036574">
    <property type="entry name" value="Scorpion_toxin-like_sf"/>
</dbReference>
<dbReference type="InterPro" id="IPR001947">
    <property type="entry name" value="Scorpion_toxinS_K_inh"/>
</dbReference>
<dbReference type="Pfam" id="PF00451">
    <property type="entry name" value="Toxin_2"/>
    <property type="match status" value="1"/>
</dbReference>
<dbReference type="PRINTS" id="PR00286">
    <property type="entry name" value="CHARYBDTOXIN"/>
</dbReference>
<dbReference type="SUPFAM" id="SSF57095">
    <property type="entry name" value="Scorpion toxin-like"/>
    <property type="match status" value="1"/>
</dbReference>
<dbReference type="PROSITE" id="PS01138">
    <property type="entry name" value="SCORP_SHORT_TOXIN"/>
    <property type="match status" value="1"/>
</dbReference>